<proteinExistence type="inferred from homology"/>
<accession>Q6BHK4</accession>
<comment type="function">
    <text evidence="1">Acts in the GPI biosynthetic pathway between GlcNAc-PI synthesis and GPI transfer to protein.</text>
</comment>
<comment type="pathway">
    <text>Glycolipid biosynthesis; glycosylphosphatidylinositol-anchor biosynthesis.</text>
</comment>
<comment type="subcellular location">
    <subcellularLocation>
        <location evidence="1">Endoplasmic reticulum membrane</location>
        <topology evidence="1">Multi-pass membrane protein</topology>
    </subcellularLocation>
</comment>
<comment type="similarity">
    <text evidence="3">Belongs to the PIGF family.</text>
</comment>
<name>GPI11_DEBHA</name>
<evidence type="ECO:0000250" key="1"/>
<evidence type="ECO:0000255" key="2"/>
<evidence type="ECO:0000305" key="3"/>
<feature type="chain" id="PRO_0000191765" description="Glycosylphosphatidylinositol anchor biosynthesis protein 11">
    <location>
        <begin position="1"/>
        <end position="236"/>
    </location>
</feature>
<feature type="transmembrane region" description="Helical" evidence="2">
    <location>
        <begin position="40"/>
        <end position="60"/>
    </location>
</feature>
<feature type="transmembrane region" description="Helical" evidence="2">
    <location>
        <begin position="65"/>
        <end position="85"/>
    </location>
</feature>
<feature type="transmembrane region" description="Helical" evidence="2">
    <location>
        <begin position="107"/>
        <end position="127"/>
    </location>
</feature>
<feature type="transmembrane region" description="Helical" evidence="2">
    <location>
        <begin position="139"/>
        <end position="159"/>
    </location>
</feature>
<feature type="transmembrane region" description="Helical" evidence="2">
    <location>
        <begin position="184"/>
        <end position="204"/>
    </location>
</feature>
<feature type="transmembrane region" description="Helical" evidence="2">
    <location>
        <begin position="215"/>
        <end position="235"/>
    </location>
</feature>
<feature type="glycosylation site" description="N-linked (GlcNAc...) asparagine" evidence="2">
    <location>
        <position position="99"/>
    </location>
</feature>
<gene>
    <name type="primary">GPI11</name>
    <name type="ordered locus">DEHA2G17886g</name>
</gene>
<protein>
    <recommendedName>
        <fullName>Glycosylphosphatidylinositol anchor biosynthesis protein 11</fullName>
    </recommendedName>
</protein>
<sequence length="236" mass="26400">MPPKLKATRKSVSFQHLSDEDISKSQYILKTEFPRIETSTLTIPFHSALLIFGLYKFGLTNDIYGVMLKGIFSLIPLQLLYGYLITTRSEKEKKTKSHNNSENVPLLLAGGIVISLVLSVPLFVALILLGAPLASHLKETYLLSIHLSLLIFYPSLVLYKYDYKSLVKFLDADGVYNAIAKNQILLSAVLAVIGTWFGVIPIPLDWDRDWQQWPITLLTGAYIGSFVGGIACFLFQ</sequence>
<dbReference type="EMBL" id="CR382139">
    <property type="protein sequence ID" value="CAG90823.2"/>
    <property type="molecule type" value="Genomic_DNA"/>
</dbReference>
<dbReference type="RefSeq" id="XP_462317.2">
    <property type="nucleotide sequence ID" value="XM_462317.1"/>
</dbReference>
<dbReference type="FunCoup" id="Q6BHK4">
    <property type="interactions" value="160"/>
</dbReference>
<dbReference type="STRING" id="284592.Q6BHK4"/>
<dbReference type="GlyCosmos" id="Q6BHK4">
    <property type="glycosylation" value="1 site, No reported glycans"/>
</dbReference>
<dbReference type="GeneID" id="2905255"/>
<dbReference type="KEGG" id="dha:DEHA2G17886g"/>
<dbReference type="VEuPathDB" id="FungiDB:DEHA2G17886g"/>
<dbReference type="eggNOG" id="KOG3144">
    <property type="taxonomic scope" value="Eukaryota"/>
</dbReference>
<dbReference type="HOGENOM" id="CLU_069429_2_0_1"/>
<dbReference type="InParanoid" id="Q6BHK4"/>
<dbReference type="OMA" id="FNCDFKV"/>
<dbReference type="OrthoDB" id="17366at2759"/>
<dbReference type="UniPathway" id="UPA00196"/>
<dbReference type="Proteomes" id="UP000000599">
    <property type="component" value="Chromosome G"/>
</dbReference>
<dbReference type="GO" id="GO:0005789">
    <property type="term" value="C:endoplasmic reticulum membrane"/>
    <property type="evidence" value="ECO:0007669"/>
    <property type="project" value="UniProtKB-SubCell"/>
</dbReference>
<dbReference type="GO" id="GO:0006506">
    <property type="term" value="P:GPI anchor biosynthetic process"/>
    <property type="evidence" value="ECO:0007669"/>
    <property type="project" value="UniProtKB-UniPathway"/>
</dbReference>
<dbReference type="InterPro" id="IPR009580">
    <property type="entry name" value="GPI_biosynthesis_protein_Pig-F"/>
</dbReference>
<dbReference type="Pfam" id="PF06699">
    <property type="entry name" value="PIG-F"/>
    <property type="match status" value="1"/>
</dbReference>
<reference key="1">
    <citation type="journal article" date="2004" name="Nature">
        <title>Genome evolution in yeasts.</title>
        <authorList>
            <person name="Dujon B."/>
            <person name="Sherman D."/>
            <person name="Fischer G."/>
            <person name="Durrens P."/>
            <person name="Casaregola S."/>
            <person name="Lafontaine I."/>
            <person name="de Montigny J."/>
            <person name="Marck C."/>
            <person name="Neuveglise C."/>
            <person name="Talla E."/>
            <person name="Goffard N."/>
            <person name="Frangeul L."/>
            <person name="Aigle M."/>
            <person name="Anthouard V."/>
            <person name="Babour A."/>
            <person name="Barbe V."/>
            <person name="Barnay S."/>
            <person name="Blanchin S."/>
            <person name="Beckerich J.-M."/>
            <person name="Beyne E."/>
            <person name="Bleykasten C."/>
            <person name="Boisrame A."/>
            <person name="Boyer J."/>
            <person name="Cattolico L."/>
            <person name="Confanioleri F."/>
            <person name="de Daruvar A."/>
            <person name="Despons L."/>
            <person name="Fabre E."/>
            <person name="Fairhead C."/>
            <person name="Ferry-Dumazet H."/>
            <person name="Groppi A."/>
            <person name="Hantraye F."/>
            <person name="Hennequin C."/>
            <person name="Jauniaux N."/>
            <person name="Joyet P."/>
            <person name="Kachouri R."/>
            <person name="Kerrest A."/>
            <person name="Koszul R."/>
            <person name="Lemaire M."/>
            <person name="Lesur I."/>
            <person name="Ma L."/>
            <person name="Muller H."/>
            <person name="Nicaud J.-M."/>
            <person name="Nikolski M."/>
            <person name="Oztas S."/>
            <person name="Ozier-Kalogeropoulos O."/>
            <person name="Pellenz S."/>
            <person name="Potier S."/>
            <person name="Richard G.-F."/>
            <person name="Straub M.-L."/>
            <person name="Suleau A."/>
            <person name="Swennen D."/>
            <person name="Tekaia F."/>
            <person name="Wesolowski-Louvel M."/>
            <person name="Westhof E."/>
            <person name="Wirth B."/>
            <person name="Zeniou-Meyer M."/>
            <person name="Zivanovic Y."/>
            <person name="Bolotin-Fukuhara M."/>
            <person name="Thierry A."/>
            <person name="Bouchier C."/>
            <person name="Caudron B."/>
            <person name="Scarpelli C."/>
            <person name="Gaillardin C."/>
            <person name="Weissenbach J."/>
            <person name="Wincker P."/>
            <person name="Souciet J.-L."/>
        </authorList>
    </citation>
    <scope>NUCLEOTIDE SEQUENCE [LARGE SCALE GENOMIC DNA]</scope>
    <source>
        <strain>ATCC 36239 / CBS 767 / BCRC 21394 / JCM 1990 / NBRC 0083 / IGC 2968</strain>
    </source>
</reference>
<organism>
    <name type="scientific">Debaryomyces hansenii (strain ATCC 36239 / CBS 767 / BCRC 21394 / JCM 1990 / NBRC 0083 / IGC 2968)</name>
    <name type="common">Yeast</name>
    <name type="synonym">Torulaspora hansenii</name>
    <dbReference type="NCBI Taxonomy" id="284592"/>
    <lineage>
        <taxon>Eukaryota</taxon>
        <taxon>Fungi</taxon>
        <taxon>Dikarya</taxon>
        <taxon>Ascomycota</taxon>
        <taxon>Saccharomycotina</taxon>
        <taxon>Pichiomycetes</taxon>
        <taxon>Debaryomycetaceae</taxon>
        <taxon>Debaryomyces</taxon>
    </lineage>
</organism>
<keyword id="KW-0256">Endoplasmic reticulum</keyword>
<keyword id="KW-0325">Glycoprotein</keyword>
<keyword id="KW-0337">GPI-anchor biosynthesis</keyword>
<keyword id="KW-0472">Membrane</keyword>
<keyword id="KW-1185">Reference proteome</keyword>
<keyword id="KW-0812">Transmembrane</keyword>
<keyword id="KW-1133">Transmembrane helix</keyword>